<dbReference type="EC" id="2.7.7.6" evidence="1"/>
<dbReference type="EMBL" id="CP001344">
    <property type="protein sequence ID" value="ACL43721.1"/>
    <property type="molecule type" value="Genomic_DNA"/>
</dbReference>
<dbReference type="SMR" id="B8HNJ0"/>
<dbReference type="STRING" id="395961.Cyan7425_1347"/>
<dbReference type="KEGG" id="cyn:Cyan7425_1347"/>
<dbReference type="eggNOG" id="ENOG5032RMS">
    <property type="taxonomic scope" value="Bacteria"/>
</dbReference>
<dbReference type="HOGENOM" id="CLU_175526_0_0_3"/>
<dbReference type="OrthoDB" id="463386at2"/>
<dbReference type="GO" id="GO:0000428">
    <property type="term" value="C:DNA-directed RNA polymerase complex"/>
    <property type="evidence" value="ECO:0007669"/>
    <property type="project" value="UniProtKB-KW"/>
</dbReference>
<dbReference type="GO" id="GO:0003677">
    <property type="term" value="F:DNA binding"/>
    <property type="evidence" value="ECO:0007669"/>
    <property type="project" value="UniProtKB-UniRule"/>
</dbReference>
<dbReference type="GO" id="GO:0003899">
    <property type="term" value="F:DNA-directed RNA polymerase activity"/>
    <property type="evidence" value="ECO:0007669"/>
    <property type="project" value="UniProtKB-UniRule"/>
</dbReference>
<dbReference type="GO" id="GO:0006351">
    <property type="term" value="P:DNA-templated transcription"/>
    <property type="evidence" value="ECO:0007669"/>
    <property type="project" value="UniProtKB-UniRule"/>
</dbReference>
<dbReference type="HAMAP" id="MF_00366">
    <property type="entry name" value="RNApol_bact_RpoZ"/>
    <property type="match status" value="1"/>
</dbReference>
<dbReference type="InterPro" id="IPR003716">
    <property type="entry name" value="DNA-dir_RNA_pol_omega"/>
</dbReference>
<dbReference type="InterPro" id="IPR006110">
    <property type="entry name" value="Pol_omega/Rpo6/RPB6"/>
</dbReference>
<dbReference type="InterPro" id="IPR036161">
    <property type="entry name" value="RPB6/omega-like_sf"/>
</dbReference>
<dbReference type="NCBIfam" id="NF001574">
    <property type="entry name" value="PRK00392.2-5"/>
    <property type="match status" value="1"/>
</dbReference>
<dbReference type="Pfam" id="PF01192">
    <property type="entry name" value="RNA_pol_Rpb6"/>
    <property type="match status" value="1"/>
</dbReference>
<dbReference type="SUPFAM" id="SSF63562">
    <property type="entry name" value="RPB6/omega subunit-like"/>
    <property type="match status" value="1"/>
</dbReference>
<accession>B8HNJ0</accession>
<evidence type="ECO:0000255" key="1">
    <source>
        <dbReference type="HAMAP-Rule" id="MF_00366"/>
    </source>
</evidence>
<organism>
    <name type="scientific">Cyanothece sp. (strain PCC 7425 / ATCC 29141)</name>
    <dbReference type="NCBI Taxonomy" id="395961"/>
    <lineage>
        <taxon>Bacteria</taxon>
        <taxon>Bacillati</taxon>
        <taxon>Cyanobacteriota</taxon>
        <taxon>Cyanophyceae</taxon>
        <taxon>Gomontiellales</taxon>
        <taxon>Cyanothecaceae</taxon>
        <taxon>Cyanothece</taxon>
    </lineage>
</organism>
<comment type="function">
    <text evidence="1">Promotes RNA polymerase assembly. Latches the N- and C-terminal regions of the beta' subunit thereby facilitating its interaction with the beta and alpha subunits.</text>
</comment>
<comment type="catalytic activity">
    <reaction evidence="1">
        <text>RNA(n) + a ribonucleoside 5'-triphosphate = RNA(n+1) + diphosphate</text>
        <dbReference type="Rhea" id="RHEA:21248"/>
        <dbReference type="Rhea" id="RHEA-COMP:14527"/>
        <dbReference type="Rhea" id="RHEA-COMP:17342"/>
        <dbReference type="ChEBI" id="CHEBI:33019"/>
        <dbReference type="ChEBI" id="CHEBI:61557"/>
        <dbReference type="ChEBI" id="CHEBI:140395"/>
        <dbReference type="EC" id="2.7.7.6"/>
    </reaction>
</comment>
<comment type="subunit">
    <text evidence="1">In cyanobacteria the RNAP catalytic core is composed of 2 alpha, 1 beta, 1 beta', 1 gamma and 1 omega subunit. When a sigma factor is associated with the core the holoenzyme is formed, which can initiate transcription.</text>
</comment>
<comment type="similarity">
    <text evidence="1">Belongs to the RNA polymerase subunit omega family.</text>
</comment>
<feature type="chain" id="PRO_1000194789" description="DNA-directed RNA polymerase subunit omega">
    <location>
        <begin position="1"/>
        <end position="75"/>
    </location>
</feature>
<proteinExistence type="inferred from homology"/>
<protein>
    <recommendedName>
        <fullName evidence="1">DNA-directed RNA polymerase subunit omega</fullName>
        <shortName evidence="1">RNAP omega subunit</shortName>
        <ecNumber evidence="1">2.7.7.6</ecNumber>
    </recommendedName>
    <alternativeName>
        <fullName evidence="1">RNA polymerase omega subunit</fullName>
    </alternativeName>
    <alternativeName>
        <fullName evidence="1">Transcriptase subunit omega</fullName>
    </alternativeName>
</protein>
<gene>
    <name evidence="1" type="primary">rpoZ</name>
    <name type="ordered locus">Cyan7425_1347</name>
</gene>
<keyword id="KW-0240">DNA-directed RNA polymerase</keyword>
<keyword id="KW-0548">Nucleotidyltransferase</keyword>
<keyword id="KW-0804">Transcription</keyword>
<keyword id="KW-0808">Transferase</keyword>
<reference key="1">
    <citation type="journal article" date="2011" name="MBio">
        <title>Novel metabolic attributes of the genus Cyanothece, comprising a group of unicellular nitrogen-fixing Cyanobacteria.</title>
        <authorList>
            <person name="Bandyopadhyay A."/>
            <person name="Elvitigala T."/>
            <person name="Welsh E."/>
            <person name="Stockel J."/>
            <person name="Liberton M."/>
            <person name="Min H."/>
            <person name="Sherman L.A."/>
            <person name="Pakrasi H.B."/>
        </authorList>
    </citation>
    <scope>NUCLEOTIDE SEQUENCE [LARGE SCALE GENOMIC DNA]</scope>
    <source>
        <strain>PCC 7425 / ATCC 29141</strain>
    </source>
</reference>
<sequence>MQKRHTFNTAQVMRRAEELIEASSNRYRITVQVANRAKKRRRLDNDDLEEGGMKAVMQAIVEMSDELAQPEIIGD</sequence>
<name>RPOZ_CYAP4</name>